<feature type="chain" id="PRO_0000384606" description="Ribosome maturation factor RimP">
    <location>
        <begin position="1"/>
        <end position="205"/>
    </location>
</feature>
<feature type="region of interest" description="Disordered" evidence="2">
    <location>
        <begin position="1"/>
        <end position="27"/>
    </location>
</feature>
<feature type="compositionally biased region" description="Polar residues" evidence="2">
    <location>
        <begin position="1"/>
        <end position="13"/>
    </location>
</feature>
<feature type="compositionally biased region" description="Basic and acidic residues" evidence="2">
    <location>
        <begin position="18"/>
        <end position="27"/>
    </location>
</feature>
<protein>
    <recommendedName>
        <fullName evidence="1">Ribosome maturation factor RimP</fullName>
    </recommendedName>
</protein>
<evidence type="ECO:0000255" key="1">
    <source>
        <dbReference type="HAMAP-Rule" id="MF_01077"/>
    </source>
</evidence>
<evidence type="ECO:0000256" key="2">
    <source>
        <dbReference type="SAM" id="MobiDB-lite"/>
    </source>
</evidence>
<comment type="function">
    <text evidence="1">Required for maturation of 30S ribosomal subunits.</text>
</comment>
<comment type="subcellular location">
    <subcellularLocation>
        <location evidence="1">Cytoplasm</location>
    </subcellularLocation>
</comment>
<comment type="similarity">
    <text evidence="1">Belongs to the RimP family.</text>
</comment>
<organism>
    <name type="scientific">Arthrobacter sp. (strain FB24)</name>
    <dbReference type="NCBI Taxonomy" id="290399"/>
    <lineage>
        <taxon>Bacteria</taxon>
        <taxon>Bacillati</taxon>
        <taxon>Actinomycetota</taxon>
        <taxon>Actinomycetes</taxon>
        <taxon>Micrococcales</taxon>
        <taxon>Micrococcaceae</taxon>
        <taxon>Arthrobacter</taxon>
    </lineage>
</organism>
<gene>
    <name evidence="1" type="primary">rimP</name>
    <name type="ordered locus">Arth_1413</name>
</gene>
<accession>A0JUT7</accession>
<reference key="1">
    <citation type="journal article" date="2013" name="Stand. Genomic Sci.">
        <title>Complete genome sequence of Arthrobacter sp. strain FB24.</title>
        <authorList>
            <person name="Nakatsu C.H."/>
            <person name="Barabote R."/>
            <person name="Thompson S."/>
            <person name="Bruce D."/>
            <person name="Detter C."/>
            <person name="Brettin T."/>
            <person name="Han C."/>
            <person name="Beasley F."/>
            <person name="Chen W."/>
            <person name="Konopka A."/>
            <person name="Xie G."/>
        </authorList>
    </citation>
    <scope>NUCLEOTIDE SEQUENCE [LARGE SCALE GENOMIC DNA]</scope>
    <source>
        <strain>FB24</strain>
    </source>
</reference>
<proteinExistence type="inferred from homology"/>
<keyword id="KW-0963">Cytoplasm</keyword>
<keyword id="KW-1185">Reference proteome</keyword>
<keyword id="KW-0690">Ribosome biogenesis</keyword>
<dbReference type="EMBL" id="CP000454">
    <property type="protein sequence ID" value="ABK02807.1"/>
    <property type="molecule type" value="Genomic_DNA"/>
</dbReference>
<dbReference type="RefSeq" id="WP_011691274.1">
    <property type="nucleotide sequence ID" value="NC_008541.1"/>
</dbReference>
<dbReference type="SMR" id="A0JUT7"/>
<dbReference type="STRING" id="290399.Arth_1413"/>
<dbReference type="KEGG" id="art:Arth_1413"/>
<dbReference type="eggNOG" id="COG0779">
    <property type="taxonomic scope" value="Bacteria"/>
</dbReference>
<dbReference type="HOGENOM" id="CLU_070525_3_0_11"/>
<dbReference type="OrthoDB" id="9805006at2"/>
<dbReference type="Proteomes" id="UP000000754">
    <property type="component" value="Chromosome"/>
</dbReference>
<dbReference type="GO" id="GO:0005829">
    <property type="term" value="C:cytosol"/>
    <property type="evidence" value="ECO:0007669"/>
    <property type="project" value="TreeGrafter"/>
</dbReference>
<dbReference type="GO" id="GO:0000028">
    <property type="term" value="P:ribosomal small subunit assembly"/>
    <property type="evidence" value="ECO:0007669"/>
    <property type="project" value="TreeGrafter"/>
</dbReference>
<dbReference type="GO" id="GO:0006412">
    <property type="term" value="P:translation"/>
    <property type="evidence" value="ECO:0007669"/>
    <property type="project" value="TreeGrafter"/>
</dbReference>
<dbReference type="CDD" id="cd01734">
    <property type="entry name" value="YlxS_C"/>
    <property type="match status" value="1"/>
</dbReference>
<dbReference type="Gene3D" id="3.30.300.70">
    <property type="entry name" value="RimP-like superfamily, N-terminal"/>
    <property type="match status" value="1"/>
</dbReference>
<dbReference type="HAMAP" id="MF_01077">
    <property type="entry name" value="RimP"/>
    <property type="match status" value="1"/>
</dbReference>
<dbReference type="InterPro" id="IPR003728">
    <property type="entry name" value="Ribosome_maturation_RimP"/>
</dbReference>
<dbReference type="InterPro" id="IPR028998">
    <property type="entry name" value="RimP_C"/>
</dbReference>
<dbReference type="InterPro" id="IPR036847">
    <property type="entry name" value="RimP_C_sf"/>
</dbReference>
<dbReference type="InterPro" id="IPR028989">
    <property type="entry name" value="RimP_N"/>
</dbReference>
<dbReference type="InterPro" id="IPR035956">
    <property type="entry name" value="RimP_N_sf"/>
</dbReference>
<dbReference type="NCBIfam" id="NF000930">
    <property type="entry name" value="PRK00092.2-2"/>
    <property type="match status" value="1"/>
</dbReference>
<dbReference type="PANTHER" id="PTHR33867">
    <property type="entry name" value="RIBOSOME MATURATION FACTOR RIMP"/>
    <property type="match status" value="1"/>
</dbReference>
<dbReference type="PANTHER" id="PTHR33867:SF1">
    <property type="entry name" value="RIBOSOME MATURATION FACTOR RIMP"/>
    <property type="match status" value="1"/>
</dbReference>
<dbReference type="Pfam" id="PF17384">
    <property type="entry name" value="DUF150_C"/>
    <property type="match status" value="1"/>
</dbReference>
<dbReference type="Pfam" id="PF02576">
    <property type="entry name" value="RimP_N"/>
    <property type="match status" value="1"/>
</dbReference>
<dbReference type="SUPFAM" id="SSF74942">
    <property type="entry name" value="YhbC-like, C-terminal domain"/>
    <property type="match status" value="1"/>
</dbReference>
<dbReference type="SUPFAM" id="SSF75420">
    <property type="entry name" value="YhbC-like, N-terminal domain"/>
    <property type="match status" value="1"/>
</dbReference>
<name>RIMP_ARTS2</name>
<sequence length="205" mass="22329">MSNAEATTSSDRTGTGKAEAESVHNPEAERVRALLEPSVQAHRLYLEDVSIHVAGANRVVHVVVDLPQEETGGVSLDVIAEISKELSGILDGDPSYDSRPYDLEVSSPGVGRPLTEPRHWHRARGRMVKVNVIQGENLTGRIQSVDDDGVTLVPEIAAKKGMKPKQGEPEKIPFDRIRNGKVEIEFSHLDEVGLEDENNGPSEEA</sequence>